<sequence length="944" mass="109104">MNNIAYKWQTRWEEDKIYESNPNPSKPKFFTTVAFPYPNSPWHIGHGRTYVTGDILARYKRMRGYNVLFPMAFHYTGTPIMAMADAIAKGDKELIETFKDIYEISPDVIPRMSDPLFMANYFKEDIKASMREIGLGIDWRREFTTIDPEFSSFVTWQFHKLQSKGYIVKDTHPVGWCPVHHIPVGMHDTKGDVEPEIGEFVLIYFNSEKGIFPAATLRPETIFGATALWINPSEMYVVASMLGKKMILSEKAAAKLSFQIDDIEIEEKIKGSKLVGLKVENPITGKHIAVLGADFVDVSLGTGVVMSVPAHAPFDYYYSKKTFKNNNIEIIPVITVEGLGNALAKDVVEKNNPKSDEDLKKLTEYVYRTEYNKGVLRSDLGNLIREEYRNELKSLGGLPVPKGRELITNFLISKGLGRKIFEVMNKPVYCRCGTEIVVKILKDQWFLDYSNKEWKELARKSLSKINVIPEESRKDFEFTIEWLEKRACARTRGLGTPLPWDKKWIIESLSDSTIYMAYYTISHKIKQYKLSPSKLTQEFWDYVMLGIGNLEEISEKTGIPSNIIKEFREEFLYWYPLDIRHSGKDLIPNHLTFFIFNHAAIFQENLWPKAIAVNGLVLYEGKKMSKSLRNIIPLRKGLKMYGVDVMRIAVSSTADMGSDVNFSESLVKTVGETLRKMYELFKSLDNYTGDILGFPEKWLLSRIYEITSSTTRHMEALELRDAVNELLFVFSSDLDEYFGMVSAEGREANNKVLREVLTIWLKLITPFAPHLAEEIWHEILKQKTYIVNEGWPEVEGSKMDELTLLEHEYMKRIVEDIRSILNIFKGTPKLIKIYALNDSRYMELLRDAIVANGQMKKFMDIHKPKSREDARILQKIFNESLEIDDKMKKLVTNYNINEVDVLNKLSKYIRRKLNVDILIEPYDEEVKKTYNKEAMPLRPAIIIE</sequence>
<reference key="1">
    <citation type="journal article" date="2000" name="Genome">
        <title>Gene content and organization of a 281-kbp contig from the genome of the extremely thermophilic archaeon, Sulfolobus solfataricus P2.</title>
        <authorList>
            <person name="Charlebois R.L."/>
            <person name="Singh R.K."/>
            <person name="Chan-Weiher C.C.-Y."/>
            <person name="Allard G."/>
            <person name="Chow C."/>
            <person name="Confalonieri F."/>
            <person name="Curtis B."/>
            <person name="Duguet M."/>
            <person name="Erauso G."/>
            <person name="Faguy D."/>
            <person name="Gaasterland T."/>
            <person name="Garrett R.A."/>
            <person name="Gordon P."/>
            <person name="Jeffries A.C."/>
            <person name="Kozera C."/>
            <person name="Kushwaha N."/>
            <person name="Lafleur E."/>
            <person name="Medina N."/>
            <person name="Peng X."/>
            <person name="Penny S.L."/>
            <person name="She Q."/>
            <person name="St Jean A."/>
            <person name="van der Oost J."/>
            <person name="Young F."/>
            <person name="Zivanovic Y."/>
            <person name="Doolittle W.F."/>
            <person name="Ragan M.A."/>
            <person name="Sensen C.W."/>
        </authorList>
    </citation>
    <scope>NUCLEOTIDE SEQUENCE [LARGE SCALE GENOMIC DNA]</scope>
    <source>
        <strain>ATCC 35092 / DSM 1617 / JCM 11322 / P2</strain>
    </source>
</reference>
<reference key="2">
    <citation type="journal article" date="2001" name="Proc. Natl. Acad. Sci. U.S.A.">
        <title>The complete genome of the crenarchaeon Sulfolobus solfataricus P2.</title>
        <authorList>
            <person name="She Q."/>
            <person name="Singh R.K."/>
            <person name="Confalonieri F."/>
            <person name="Zivanovic Y."/>
            <person name="Allard G."/>
            <person name="Awayez M.J."/>
            <person name="Chan-Weiher C.C.-Y."/>
            <person name="Clausen I.G."/>
            <person name="Curtis B.A."/>
            <person name="De Moors A."/>
            <person name="Erauso G."/>
            <person name="Fletcher C."/>
            <person name="Gordon P.M.K."/>
            <person name="Heikamp-de Jong I."/>
            <person name="Jeffries A.C."/>
            <person name="Kozera C.J."/>
            <person name="Medina N."/>
            <person name="Peng X."/>
            <person name="Thi-Ngoc H.P."/>
            <person name="Redder P."/>
            <person name="Schenk M.E."/>
            <person name="Theriault C."/>
            <person name="Tolstrup N."/>
            <person name="Charlebois R.L."/>
            <person name="Doolittle W.F."/>
            <person name="Duguet M."/>
            <person name="Gaasterland T."/>
            <person name="Garrett R.A."/>
            <person name="Ragan M.A."/>
            <person name="Sensen C.W."/>
            <person name="Van der Oost J."/>
        </authorList>
    </citation>
    <scope>NUCLEOTIDE SEQUENCE [LARGE SCALE GENOMIC DNA]</scope>
    <source>
        <strain>ATCC 35092 / DSM 1617 / JCM 11322 / P2</strain>
    </source>
</reference>
<reference key="3">
    <citation type="journal article" date="1997" name="J. Bacteriol.">
        <title>Evolutionary analysis of the hisCGABdFDEHI gene cluster from the archaeon Sulfolobus solfataricus P2.</title>
        <authorList>
            <person name="Charlebois R.L."/>
            <person name="Sensen C.W."/>
            <person name="Doolittle W.F."/>
            <person name="Brown J.R."/>
        </authorList>
    </citation>
    <scope>NUCLEOTIDE SEQUENCE [GENOMIC DNA] OF 762-944</scope>
    <source>
        <strain>ATCC 35092 / DSM 1617 / JCM 11322 / P2</strain>
    </source>
</reference>
<protein>
    <recommendedName>
        <fullName evidence="1">Leucine--tRNA ligase 2</fullName>
        <ecNumber evidence="1">6.1.1.4</ecNumber>
    </recommendedName>
    <alternativeName>
        <fullName evidence="1">Leucyl-tRNA synthetase 2</fullName>
        <shortName evidence="1">LeuRS 2</shortName>
    </alternativeName>
</protein>
<organism>
    <name type="scientific">Saccharolobus solfataricus (strain ATCC 35092 / DSM 1617 / JCM 11322 / P2)</name>
    <name type="common">Sulfolobus solfataricus</name>
    <dbReference type="NCBI Taxonomy" id="273057"/>
    <lineage>
        <taxon>Archaea</taxon>
        <taxon>Thermoproteota</taxon>
        <taxon>Thermoprotei</taxon>
        <taxon>Sulfolobales</taxon>
        <taxon>Sulfolobaceae</taxon>
        <taxon>Saccharolobus</taxon>
    </lineage>
</organism>
<proteinExistence type="inferred from homology"/>
<comment type="catalytic activity">
    <reaction evidence="1">
        <text>tRNA(Leu) + L-leucine + ATP = L-leucyl-tRNA(Leu) + AMP + diphosphate</text>
        <dbReference type="Rhea" id="RHEA:11688"/>
        <dbReference type="Rhea" id="RHEA-COMP:9613"/>
        <dbReference type="Rhea" id="RHEA-COMP:9622"/>
        <dbReference type="ChEBI" id="CHEBI:30616"/>
        <dbReference type="ChEBI" id="CHEBI:33019"/>
        <dbReference type="ChEBI" id="CHEBI:57427"/>
        <dbReference type="ChEBI" id="CHEBI:78442"/>
        <dbReference type="ChEBI" id="CHEBI:78494"/>
        <dbReference type="ChEBI" id="CHEBI:456215"/>
        <dbReference type="EC" id="6.1.1.4"/>
    </reaction>
</comment>
<comment type="subcellular location">
    <subcellularLocation>
        <location evidence="1">Cytoplasm</location>
    </subcellularLocation>
</comment>
<comment type="similarity">
    <text evidence="1">Belongs to the class-I aminoacyl-tRNA synthetase family.</text>
</comment>
<evidence type="ECO:0000255" key="1">
    <source>
        <dbReference type="HAMAP-Rule" id="MF_00049"/>
    </source>
</evidence>
<dbReference type="EC" id="6.1.1.4" evidence="1"/>
<dbReference type="EMBL" id="Y18930">
    <property type="protein sequence ID" value="CAB57710.1"/>
    <property type="molecule type" value="Genomic_DNA"/>
</dbReference>
<dbReference type="EMBL" id="AE006641">
    <property type="protein sequence ID" value="AAK40902.1"/>
    <property type="molecule type" value="Genomic_DNA"/>
</dbReference>
<dbReference type="EMBL" id="U82227">
    <property type="protein sequence ID" value="AAB63016.1"/>
    <property type="molecule type" value="Genomic_DNA"/>
</dbReference>
<dbReference type="PIR" id="G90205">
    <property type="entry name" value="G90205"/>
</dbReference>
<dbReference type="RefSeq" id="WP_009991108.1">
    <property type="nucleotide sequence ID" value="NC_002754.1"/>
</dbReference>
<dbReference type="SMR" id="O33768"/>
<dbReference type="FunCoup" id="O33768">
    <property type="interactions" value="285"/>
</dbReference>
<dbReference type="STRING" id="273057.SSO0589"/>
<dbReference type="PaxDb" id="273057-SSO0589"/>
<dbReference type="EnsemblBacteria" id="AAK40902">
    <property type="protein sequence ID" value="AAK40902"/>
    <property type="gene ID" value="SSO0589"/>
</dbReference>
<dbReference type="GeneID" id="44129592"/>
<dbReference type="KEGG" id="sso:SSO0589"/>
<dbReference type="PATRIC" id="fig|273057.12.peg.598"/>
<dbReference type="eggNOG" id="arCOG00809">
    <property type="taxonomic scope" value="Archaea"/>
</dbReference>
<dbReference type="HOGENOM" id="CLU_004174_0_0_2"/>
<dbReference type="InParanoid" id="O33768"/>
<dbReference type="PhylomeDB" id="O33768"/>
<dbReference type="Proteomes" id="UP000001974">
    <property type="component" value="Chromosome"/>
</dbReference>
<dbReference type="GO" id="GO:0005737">
    <property type="term" value="C:cytoplasm"/>
    <property type="evidence" value="ECO:0007669"/>
    <property type="project" value="UniProtKB-SubCell"/>
</dbReference>
<dbReference type="GO" id="GO:0002161">
    <property type="term" value="F:aminoacyl-tRNA deacylase activity"/>
    <property type="evidence" value="ECO:0007669"/>
    <property type="project" value="InterPro"/>
</dbReference>
<dbReference type="GO" id="GO:0005524">
    <property type="term" value="F:ATP binding"/>
    <property type="evidence" value="ECO:0007669"/>
    <property type="project" value="UniProtKB-UniRule"/>
</dbReference>
<dbReference type="GO" id="GO:0004823">
    <property type="term" value="F:leucine-tRNA ligase activity"/>
    <property type="evidence" value="ECO:0000318"/>
    <property type="project" value="GO_Central"/>
</dbReference>
<dbReference type="GO" id="GO:0006429">
    <property type="term" value="P:leucyl-tRNA aminoacylation"/>
    <property type="evidence" value="ECO:0000318"/>
    <property type="project" value="GO_Central"/>
</dbReference>
<dbReference type="CDD" id="cd07959">
    <property type="entry name" value="Anticodon_Ia_Leu_AEc"/>
    <property type="match status" value="1"/>
</dbReference>
<dbReference type="CDD" id="cd00812">
    <property type="entry name" value="LeuRS_core"/>
    <property type="match status" value="1"/>
</dbReference>
<dbReference type="Gene3D" id="3.30.2320.20">
    <property type="entry name" value="Class I aminoacyl-tRNA synthetases (RS)"/>
    <property type="match status" value="1"/>
</dbReference>
<dbReference type="Gene3D" id="3.40.50.620">
    <property type="entry name" value="HUPs"/>
    <property type="match status" value="1"/>
</dbReference>
<dbReference type="Gene3D" id="1.10.730.10">
    <property type="entry name" value="Isoleucyl-tRNA Synthetase, Domain 1"/>
    <property type="match status" value="1"/>
</dbReference>
<dbReference type="Gene3D" id="1.10.10.720">
    <property type="entry name" value="leucyl-tRNA synthetase"/>
    <property type="match status" value="1"/>
</dbReference>
<dbReference type="Gene3D" id="3.90.740.10">
    <property type="entry name" value="Valyl/Leucyl/Isoleucyl-tRNA synthetase, editing domain"/>
    <property type="match status" value="1"/>
</dbReference>
<dbReference type="HAMAP" id="MF_00049_A">
    <property type="entry name" value="Leu_tRNA_synth_A"/>
    <property type="match status" value="1"/>
</dbReference>
<dbReference type="InterPro" id="IPR002300">
    <property type="entry name" value="aa-tRNA-synth_Ia"/>
</dbReference>
<dbReference type="InterPro" id="IPR020791">
    <property type="entry name" value="Leu-tRNA-lgase_arc"/>
</dbReference>
<dbReference type="InterPro" id="IPR004493">
    <property type="entry name" value="Leu-tRNA-synth_Ia_arc/euk"/>
</dbReference>
<dbReference type="InterPro" id="IPR013155">
    <property type="entry name" value="M/V/L/I-tRNA-synth_anticd-bd"/>
</dbReference>
<dbReference type="InterPro" id="IPR014729">
    <property type="entry name" value="Rossmann-like_a/b/a_fold"/>
</dbReference>
<dbReference type="InterPro" id="IPR009080">
    <property type="entry name" value="tRNAsynth_Ia_anticodon-bd"/>
</dbReference>
<dbReference type="InterPro" id="IPR009008">
    <property type="entry name" value="Val/Leu/Ile-tRNA-synth_edit"/>
</dbReference>
<dbReference type="NCBIfam" id="TIGR00395">
    <property type="entry name" value="leuS_arch"/>
    <property type="match status" value="1"/>
</dbReference>
<dbReference type="NCBIfam" id="NF008957">
    <property type="entry name" value="PRK12300.1"/>
    <property type="match status" value="1"/>
</dbReference>
<dbReference type="PANTHER" id="PTHR45794:SF1">
    <property type="entry name" value="LEUCINE--TRNA LIGASE, CYTOPLASMIC"/>
    <property type="match status" value="1"/>
</dbReference>
<dbReference type="PANTHER" id="PTHR45794">
    <property type="entry name" value="LEUCYL-TRNA SYNTHETASE"/>
    <property type="match status" value="1"/>
</dbReference>
<dbReference type="Pfam" id="PF08264">
    <property type="entry name" value="Anticodon_1"/>
    <property type="match status" value="1"/>
</dbReference>
<dbReference type="Pfam" id="PF00133">
    <property type="entry name" value="tRNA-synt_1"/>
    <property type="match status" value="1"/>
</dbReference>
<dbReference type="SUPFAM" id="SSF47323">
    <property type="entry name" value="Anticodon-binding domain of a subclass of class I aminoacyl-tRNA synthetases"/>
    <property type="match status" value="1"/>
</dbReference>
<dbReference type="SUPFAM" id="SSF52374">
    <property type="entry name" value="Nucleotidylyl transferase"/>
    <property type="match status" value="1"/>
</dbReference>
<dbReference type="SUPFAM" id="SSF50677">
    <property type="entry name" value="ValRS/IleRS/LeuRS editing domain"/>
    <property type="match status" value="1"/>
</dbReference>
<accession>O33768</accession>
<accession>Q9UWZ3</accession>
<keyword id="KW-0030">Aminoacyl-tRNA synthetase</keyword>
<keyword id="KW-0067">ATP-binding</keyword>
<keyword id="KW-0963">Cytoplasm</keyword>
<keyword id="KW-0436">Ligase</keyword>
<keyword id="KW-0547">Nucleotide-binding</keyword>
<keyword id="KW-0648">Protein biosynthesis</keyword>
<keyword id="KW-1185">Reference proteome</keyword>
<feature type="chain" id="PRO_0000152145" description="Leucine--tRNA ligase 2">
    <location>
        <begin position="1"/>
        <end position="944"/>
    </location>
</feature>
<feature type="short sequence motif" description="'HIGH' region">
    <location>
        <begin position="36"/>
        <end position="46"/>
    </location>
</feature>
<feature type="short sequence motif" description="'KMSKS' region">
    <location>
        <begin position="623"/>
        <end position="627"/>
    </location>
</feature>
<feature type="binding site" evidence="1">
    <location>
        <position position="626"/>
    </location>
    <ligand>
        <name>ATP</name>
        <dbReference type="ChEBI" id="CHEBI:30616"/>
    </ligand>
</feature>
<gene>
    <name evidence="1" type="primary">leuS2</name>
    <name type="synonym">leuS</name>
    <name type="ordered locus">SSO0589</name>
    <name type="ORF">C21_009</name>
</gene>
<name>SYL2_SACS2</name>